<reference key="1">
    <citation type="submission" date="2000-02" db="EMBL/GenBank/DDBJ databases">
        <authorList>
            <person name="Conley C.A."/>
            <person name="Fowler V.M."/>
        </authorList>
    </citation>
    <scope>NUCLEOTIDE SEQUENCE [MRNA]</scope>
</reference>
<reference key="2">
    <citation type="journal article" date="2000" name="Genomics">
        <title>Sequencing, expression analysis, and mapping of three unique human tropomodulin genes and their mouse orthologs.</title>
        <authorList>
            <person name="Cox P.R."/>
            <person name="Zoghbi H.Y."/>
        </authorList>
    </citation>
    <scope>NUCLEOTIDE SEQUENCE [MRNA]</scope>
</reference>
<reference key="3">
    <citation type="journal article" date="2005" name="Science">
        <title>The transcriptional landscape of the mammalian genome.</title>
        <authorList>
            <person name="Carninci P."/>
            <person name="Kasukawa T."/>
            <person name="Katayama S."/>
            <person name="Gough J."/>
            <person name="Frith M.C."/>
            <person name="Maeda N."/>
            <person name="Oyama R."/>
            <person name="Ravasi T."/>
            <person name="Lenhard B."/>
            <person name="Wells C."/>
            <person name="Kodzius R."/>
            <person name="Shimokawa K."/>
            <person name="Bajic V.B."/>
            <person name="Brenner S.E."/>
            <person name="Batalov S."/>
            <person name="Forrest A.R."/>
            <person name="Zavolan M."/>
            <person name="Davis M.J."/>
            <person name="Wilming L.G."/>
            <person name="Aidinis V."/>
            <person name="Allen J.E."/>
            <person name="Ambesi-Impiombato A."/>
            <person name="Apweiler R."/>
            <person name="Aturaliya R.N."/>
            <person name="Bailey T.L."/>
            <person name="Bansal M."/>
            <person name="Baxter L."/>
            <person name="Beisel K.W."/>
            <person name="Bersano T."/>
            <person name="Bono H."/>
            <person name="Chalk A.M."/>
            <person name="Chiu K.P."/>
            <person name="Choudhary V."/>
            <person name="Christoffels A."/>
            <person name="Clutterbuck D.R."/>
            <person name="Crowe M.L."/>
            <person name="Dalla E."/>
            <person name="Dalrymple B.P."/>
            <person name="de Bono B."/>
            <person name="Della Gatta G."/>
            <person name="di Bernardo D."/>
            <person name="Down T."/>
            <person name="Engstrom P."/>
            <person name="Fagiolini M."/>
            <person name="Faulkner G."/>
            <person name="Fletcher C.F."/>
            <person name="Fukushima T."/>
            <person name="Furuno M."/>
            <person name="Futaki S."/>
            <person name="Gariboldi M."/>
            <person name="Georgii-Hemming P."/>
            <person name="Gingeras T.R."/>
            <person name="Gojobori T."/>
            <person name="Green R.E."/>
            <person name="Gustincich S."/>
            <person name="Harbers M."/>
            <person name="Hayashi Y."/>
            <person name="Hensch T.K."/>
            <person name="Hirokawa N."/>
            <person name="Hill D."/>
            <person name="Huminiecki L."/>
            <person name="Iacono M."/>
            <person name="Ikeo K."/>
            <person name="Iwama A."/>
            <person name="Ishikawa T."/>
            <person name="Jakt M."/>
            <person name="Kanapin A."/>
            <person name="Katoh M."/>
            <person name="Kawasawa Y."/>
            <person name="Kelso J."/>
            <person name="Kitamura H."/>
            <person name="Kitano H."/>
            <person name="Kollias G."/>
            <person name="Krishnan S.P."/>
            <person name="Kruger A."/>
            <person name="Kummerfeld S.K."/>
            <person name="Kurochkin I.V."/>
            <person name="Lareau L.F."/>
            <person name="Lazarevic D."/>
            <person name="Lipovich L."/>
            <person name="Liu J."/>
            <person name="Liuni S."/>
            <person name="McWilliam S."/>
            <person name="Madan Babu M."/>
            <person name="Madera M."/>
            <person name="Marchionni L."/>
            <person name="Matsuda H."/>
            <person name="Matsuzawa S."/>
            <person name="Miki H."/>
            <person name="Mignone F."/>
            <person name="Miyake S."/>
            <person name="Morris K."/>
            <person name="Mottagui-Tabar S."/>
            <person name="Mulder N."/>
            <person name="Nakano N."/>
            <person name="Nakauchi H."/>
            <person name="Ng P."/>
            <person name="Nilsson R."/>
            <person name="Nishiguchi S."/>
            <person name="Nishikawa S."/>
            <person name="Nori F."/>
            <person name="Ohara O."/>
            <person name="Okazaki Y."/>
            <person name="Orlando V."/>
            <person name="Pang K.C."/>
            <person name="Pavan W.J."/>
            <person name="Pavesi G."/>
            <person name="Pesole G."/>
            <person name="Petrovsky N."/>
            <person name="Piazza S."/>
            <person name="Reed J."/>
            <person name="Reid J.F."/>
            <person name="Ring B.Z."/>
            <person name="Ringwald M."/>
            <person name="Rost B."/>
            <person name="Ruan Y."/>
            <person name="Salzberg S.L."/>
            <person name="Sandelin A."/>
            <person name="Schneider C."/>
            <person name="Schoenbach C."/>
            <person name="Sekiguchi K."/>
            <person name="Semple C.A."/>
            <person name="Seno S."/>
            <person name="Sessa L."/>
            <person name="Sheng Y."/>
            <person name="Shibata Y."/>
            <person name="Shimada H."/>
            <person name="Shimada K."/>
            <person name="Silva D."/>
            <person name="Sinclair B."/>
            <person name="Sperling S."/>
            <person name="Stupka E."/>
            <person name="Sugiura K."/>
            <person name="Sultana R."/>
            <person name="Takenaka Y."/>
            <person name="Taki K."/>
            <person name="Tammoja K."/>
            <person name="Tan S.L."/>
            <person name="Tang S."/>
            <person name="Taylor M.S."/>
            <person name="Tegner J."/>
            <person name="Teichmann S.A."/>
            <person name="Ueda H.R."/>
            <person name="van Nimwegen E."/>
            <person name="Verardo R."/>
            <person name="Wei C.L."/>
            <person name="Yagi K."/>
            <person name="Yamanishi H."/>
            <person name="Zabarovsky E."/>
            <person name="Zhu S."/>
            <person name="Zimmer A."/>
            <person name="Hide W."/>
            <person name="Bult C."/>
            <person name="Grimmond S.M."/>
            <person name="Teasdale R.D."/>
            <person name="Liu E.T."/>
            <person name="Brusic V."/>
            <person name="Quackenbush J."/>
            <person name="Wahlestedt C."/>
            <person name="Mattick J.S."/>
            <person name="Hume D.A."/>
            <person name="Kai C."/>
            <person name="Sasaki D."/>
            <person name="Tomaru Y."/>
            <person name="Fukuda S."/>
            <person name="Kanamori-Katayama M."/>
            <person name="Suzuki M."/>
            <person name="Aoki J."/>
            <person name="Arakawa T."/>
            <person name="Iida J."/>
            <person name="Imamura K."/>
            <person name="Itoh M."/>
            <person name="Kato T."/>
            <person name="Kawaji H."/>
            <person name="Kawagashira N."/>
            <person name="Kawashima T."/>
            <person name="Kojima M."/>
            <person name="Kondo S."/>
            <person name="Konno H."/>
            <person name="Nakano K."/>
            <person name="Ninomiya N."/>
            <person name="Nishio T."/>
            <person name="Okada M."/>
            <person name="Plessy C."/>
            <person name="Shibata K."/>
            <person name="Shiraki T."/>
            <person name="Suzuki S."/>
            <person name="Tagami M."/>
            <person name="Waki K."/>
            <person name="Watahiki A."/>
            <person name="Okamura-Oho Y."/>
            <person name="Suzuki H."/>
            <person name="Kawai J."/>
            <person name="Hayashizaki Y."/>
        </authorList>
    </citation>
    <scope>NUCLEOTIDE SEQUENCE [LARGE SCALE MRNA]</scope>
    <source>
        <strain>C57BL/6J</strain>
        <tissue>Liver</tissue>
        <tissue>Placenta</tissue>
    </source>
</reference>
<reference key="4">
    <citation type="journal article" date="2004" name="Genome Res.">
        <title>The status, quality, and expansion of the NIH full-length cDNA project: the Mammalian Gene Collection (MGC).</title>
        <authorList>
            <consortium name="The MGC Project Team"/>
        </authorList>
    </citation>
    <scope>NUCLEOTIDE SEQUENCE [LARGE SCALE MRNA]</scope>
    <source>
        <strain>C57BL/6J</strain>
    </source>
</reference>
<reference key="5">
    <citation type="journal article" date="2010" name="Cell">
        <title>A tissue-specific atlas of mouse protein phosphorylation and expression.</title>
        <authorList>
            <person name="Huttlin E.L."/>
            <person name="Jedrychowski M.P."/>
            <person name="Elias J.E."/>
            <person name="Goswami T."/>
            <person name="Rad R."/>
            <person name="Beausoleil S.A."/>
            <person name="Villen J."/>
            <person name="Haas W."/>
            <person name="Sowa M.E."/>
            <person name="Gygi S.P."/>
        </authorList>
    </citation>
    <scope>PHOSPHORYLATION [LARGE SCALE ANALYSIS] AT SER-25</scope>
    <scope>IDENTIFICATION BY MASS SPECTROMETRY [LARGE SCALE ANALYSIS]</scope>
    <source>
        <tissue>Kidney</tissue>
        <tissue>Lung</tissue>
        <tissue>Pancreas</tissue>
        <tissue>Spleen</tissue>
        <tissue>Testis</tissue>
    </source>
</reference>
<reference key="6">
    <citation type="journal article" date="2023" name="Proc. Natl. Acad. Sci. U.S.A.">
        <title>A human FLII gene variant alters sarcomeric actin thin filament length and predisposes to cardiomyopathy.</title>
        <authorList>
            <person name="Kuwabara Y."/>
            <person name="York A.J."/>
            <person name="Lin S.C."/>
            <person name="Sargent M.A."/>
            <person name="Grimes K.M."/>
            <person name="Pirruccello J.P."/>
            <person name="Molkentin J.D."/>
        </authorList>
    </citation>
    <scope>INTERACTION WITH FLII</scope>
</reference>
<evidence type="ECO:0000250" key="1"/>
<evidence type="ECO:0000269" key="2">
    <source>
    </source>
</evidence>
<evidence type="ECO:0000305" key="3"/>
<evidence type="ECO:0007744" key="4">
    <source>
    </source>
</evidence>
<comment type="function">
    <text evidence="1">Blocks the elongation and depolymerization of the actin filaments at the pointed end. The Tmod/TM complex contributes to the formation of the short actin protofilament, which in turn defines the geometry of the membrane skeleton (By similarity).</text>
</comment>
<comment type="subunit">
    <text evidence="1 2">Binds to the N-terminus of tropomyosin and to actin. Interacts with FLII (PubMed:37126682).</text>
</comment>
<comment type="subcellular location">
    <subcellularLocation>
        <location evidence="1">Cytoplasm</location>
        <location evidence="1">Cytoskeleton</location>
    </subcellularLocation>
</comment>
<comment type="tissue specificity">
    <text>Ubiquitous.</text>
</comment>
<comment type="similarity">
    <text evidence="3">Belongs to the tropomodulin family.</text>
</comment>
<feature type="chain" id="PRO_0000186135" description="Tropomodulin-3">
    <location>
        <begin position="1"/>
        <end position="352"/>
    </location>
</feature>
<feature type="modified residue" description="Phosphoserine" evidence="4">
    <location>
        <position position="25"/>
    </location>
</feature>
<gene>
    <name type="primary">Tmod3</name>
</gene>
<accession>Q9JHJ0</accession>
<accession>Q3TIT1</accession>
<protein>
    <recommendedName>
        <fullName>Tropomodulin-3</fullName>
    </recommendedName>
    <alternativeName>
        <fullName>Ubiquitous tropomodulin</fullName>
        <shortName>U-Tmod</shortName>
    </alternativeName>
</protein>
<dbReference type="EMBL" id="AF237630">
    <property type="protein sequence ID" value="AAF45298.1"/>
    <property type="molecule type" value="mRNA"/>
</dbReference>
<dbReference type="EMBL" id="AF177172">
    <property type="protein sequence ID" value="AAF31671.1"/>
    <property type="molecule type" value="mRNA"/>
</dbReference>
<dbReference type="EMBL" id="AK050372">
    <property type="protein sequence ID" value="BAC34216.1"/>
    <property type="molecule type" value="mRNA"/>
</dbReference>
<dbReference type="EMBL" id="AK167723">
    <property type="protein sequence ID" value="BAE39765.1"/>
    <property type="molecule type" value="mRNA"/>
</dbReference>
<dbReference type="EMBL" id="BC082595">
    <property type="protein sequence ID" value="AAH82595.1"/>
    <property type="molecule type" value="mRNA"/>
</dbReference>
<dbReference type="CCDS" id="CCDS23344.1"/>
<dbReference type="RefSeq" id="NP_058659.1">
    <property type="nucleotide sequence ID" value="NM_016963.2"/>
</dbReference>
<dbReference type="SMR" id="Q9JHJ0"/>
<dbReference type="BioGRID" id="206138">
    <property type="interactions" value="99"/>
</dbReference>
<dbReference type="FunCoup" id="Q9JHJ0">
    <property type="interactions" value="1373"/>
</dbReference>
<dbReference type="IntAct" id="Q9JHJ0">
    <property type="interactions" value="92"/>
</dbReference>
<dbReference type="MINT" id="Q9JHJ0"/>
<dbReference type="STRING" id="10090.ENSMUSP00000072087"/>
<dbReference type="GlyGen" id="Q9JHJ0">
    <property type="glycosylation" value="1 site, 1 O-linked glycan (1 site)"/>
</dbReference>
<dbReference type="iPTMnet" id="Q9JHJ0"/>
<dbReference type="PhosphoSitePlus" id="Q9JHJ0"/>
<dbReference type="jPOST" id="Q9JHJ0"/>
<dbReference type="PaxDb" id="10090-ENSMUSP00000072087"/>
<dbReference type="ProteomicsDB" id="259041"/>
<dbReference type="Pumba" id="Q9JHJ0"/>
<dbReference type="Antibodypedia" id="978">
    <property type="antibodies" value="152 antibodies from 28 providers"/>
</dbReference>
<dbReference type="DNASU" id="50875"/>
<dbReference type="Ensembl" id="ENSMUST00000072232.9">
    <property type="protein sequence ID" value="ENSMUSP00000072087.8"/>
    <property type="gene ID" value="ENSMUSG00000058587.10"/>
</dbReference>
<dbReference type="GeneID" id="50875"/>
<dbReference type="KEGG" id="mmu:50875"/>
<dbReference type="UCSC" id="uc009qsi.1">
    <property type="organism name" value="mouse"/>
</dbReference>
<dbReference type="AGR" id="MGI:1355315"/>
<dbReference type="CTD" id="29766"/>
<dbReference type="MGI" id="MGI:1355315">
    <property type="gene designation" value="Tmod3"/>
</dbReference>
<dbReference type="VEuPathDB" id="HostDB:ENSMUSG00000058587"/>
<dbReference type="eggNOG" id="KOG3735">
    <property type="taxonomic scope" value="Eukaryota"/>
</dbReference>
<dbReference type="GeneTree" id="ENSGT00940000158280"/>
<dbReference type="HOGENOM" id="CLU_031052_0_1_1"/>
<dbReference type="InParanoid" id="Q9JHJ0"/>
<dbReference type="OMA" id="QKPMQTF"/>
<dbReference type="OrthoDB" id="2163268at2759"/>
<dbReference type="PhylomeDB" id="Q9JHJ0"/>
<dbReference type="TreeFam" id="TF315841"/>
<dbReference type="Reactome" id="R-MMU-390522">
    <property type="pathway name" value="Striated Muscle Contraction"/>
</dbReference>
<dbReference type="Reactome" id="R-MMU-9013418">
    <property type="pathway name" value="RHOBTB2 GTPase cycle"/>
</dbReference>
<dbReference type="Reactome" id="R-MMU-9696264">
    <property type="pathway name" value="RND3 GTPase cycle"/>
</dbReference>
<dbReference type="BioGRID-ORCS" id="50875">
    <property type="hits" value="3 hits in 76 CRISPR screens"/>
</dbReference>
<dbReference type="ChiTaRS" id="Tmod3">
    <property type="organism name" value="mouse"/>
</dbReference>
<dbReference type="PRO" id="PR:Q9JHJ0"/>
<dbReference type="Proteomes" id="UP000000589">
    <property type="component" value="Chromosome 9"/>
</dbReference>
<dbReference type="RNAct" id="Q9JHJ0">
    <property type="molecule type" value="protein"/>
</dbReference>
<dbReference type="Bgee" id="ENSMUSG00000058587">
    <property type="expression patterns" value="Expressed in thoracic mammary gland and 290 other cell types or tissues"/>
</dbReference>
<dbReference type="ExpressionAtlas" id="Q9JHJ0">
    <property type="expression patterns" value="baseline and differential"/>
</dbReference>
<dbReference type="GO" id="GO:0031941">
    <property type="term" value="C:filamentous actin"/>
    <property type="evidence" value="ECO:0000266"/>
    <property type="project" value="MGI"/>
</dbReference>
<dbReference type="GO" id="GO:0030027">
    <property type="term" value="C:lamellipodium"/>
    <property type="evidence" value="ECO:0000266"/>
    <property type="project" value="MGI"/>
</dbReference>
<dbReference type="GO" id="GO:0001726">
    <property type="term" value="C:ruffle"/>
    <property type="evidence" value="ECO:0000266"/>
    <property type="project" value="MGI"/>
</dbReference>
<dbReference type="GO" id="GO:0005865">
    <property type="term" value="C:striated muscle thin filament"/>
    <property type="evidence" value="ECO:0000314"/>
    <property type="project" value="MGI"/>
</dbReference>
<dbReference type="GO" id="GO:0003779">
    <property type="term" value="F:actin binding"/>
    <property type="evidence" value="ECO:0007669"/>
    <property type="project" value="UniProtKB-KW"/>
</dbReference>
<dbReference type="GO" id="GO:0051011">
    <property type="term" value="F:microtubule minus-end binding"/>
    <property type="evidence" value="ECO:0000266"/>
    <property type="project" value="MGI"/>
</dbReference>
<dbReference type="GO" id="GO:0005523">
    <property type="term" value="F:tropomyosin binding"/>
    <property type="evidence" value="ECO:0000314"/>
    <property type="project" value="MGI"/>
</dbReference>
<dbReference type="GO" id="GO:0030036">
    <property type="term" value="P:actin cytoskeleton organization"/>
    <property type="evidence" value="ECO:0000315"/>
    <property type="project" value="MGI"/>
</dbReference>
<dbReference type="GO" id="GO:0048870">
    <property type="term" value="P:cell motility"/>
    <property type="evidence" value="ECO:0000266"/>
    <property type="project" value="MGI"/>
</dbReference>
<dbReference type="GO" id="GO:0048821">
    <property type="term" value="P:erythrocyte development"/>
    <property type="evidence" value="ECO:0000315"/>
    <property type="project" value="MGI"/>
</dbReference>
<dbReference type="GO" id="GO:0044772">
    <property type="term" value="P:mitotic cell cycle phase transition"/>
    <property type="evidence" value="ECO:0000315"/>
    <property type="project" value="MGI"/>
</dbReference>
<dbReference type="GO" id="GO:0051694">
    <property type="term" value="P:pointed-end actin filament capping"/>
    <property type="evidence" value="ECO:0000266"/>
    <property type="project" value="MGI"/>
</dbReference>
<dbReference type="GO" id="GO:1901992">
    <property type="term" value="P:positive regulation of mitotic cell cycle phase transition"/>
    <property type="evidence" value="ECO:0000315"/>
    <property type="project" value="MGI"/>
</dbReference>
<dbReference type="FunFam" id="3.80.10.10:FF:000006">
    <property type="entry name" value="Tropomodulin 2"/>
    <property type="match status" value="1"/>
</dbReference>
<dbReference type="Gene3D" id="3.80.10.10">
    <property type="entry name" value="Ribonuclease Inhibitor"/>
    <property type="match status" value="1"/>
</dbReference>
<dbReference type="InterPro" id="IPR032675">
    <property type="entry name" value="LRR_dom_sf"/>
</dbReference>
<dbReference type="InterPro" id="IPR004934">
    <property type="entry name" value="TMOD"/>
</dbReference>
<dbReference type="PANTHER" id="PTHR10901">
    <property type="entry name" value="TROPOMODULIN"/>
    <property type="match status" value="1"/>
</dbReference>
<dbReference type="PANTHER" id="PTHR10901:SF18">
    <property type="entry name" value="TROPOMODULIN-3"/>
    <property type="match status" value="1"/>
</dbReference>
<dbReference type="Pfam" id="PF03250">
    <property type="entry name" value="Tropomodulin"/>
    <property type="match status" value="1"/>
</dbReference>
<dbReference type="SUPFAM" id="SSF52047">
    <property type="entry name" value="RNI-like"/>
    <property type="match status" value="1"/>
</dbReference>
<sequence length="352" mass="39503">MALPFRKDLGDYKDLDEDELLGKLSESELKQLETVLDDLDPENALLPAGFRQKNQTSKSATGPFDRERLLSYLEKQALEHKDRDDYVPYTGEKKGKIFIPKQKPAQTLTEETISLDPELEEALTSASDTELCDLAAILGMHNLIADTPFCDVLGSSNGVNQERFPNVVKGEKILPVFDEPPNPTNVEESLKRIRENDARLVEVNLNNIKNIPIPTLKDFAKTLEANTHVKHFSLAATRSNDPVAVAFADMLKVNKTLKSLNMESNFITGAGVLALIDALRDNETLMELKIDNQRQQLGTSVELEMAKMLEENTNILKFGYQFTQQGPRTRAANAITKNNDLVRKRRIEGDHQ</sequence>
<name>TMOD3_MOUSE</name>
<keyword id="KW-0009">Actin-binding</keyword>
<keyword id="KW-0963">Cytoplasm</keyword>
<keyword id="KW-0206">Cytoskeleton</keyword>
<keyword id="KW-0597">Phosphoprotein</keyword>
<keyword id="KW-1185">Reference proteome</keyword>
<organism>
    <name type="scientific">Mus musculus</name>
    <name type="common">Mouse</name>
    <dbReference type="NCBI Taxonomy" id="10090"/>
    <lineage>
        <taxon>Eukaryota</taxon>
        <taxon>Metazoa</taxon>
        <taxon>Chordata</taxon>
        <taxon>Craniata</taxon>
        <taxon>Vertebrata</taxon>
        <taxon>Euteleostomi</taxon>
        <taxon>Mammalia</taxon>
        <taxon>Eutheria</taxon>
        <taxon>Euarchontoglires</taxon>
        <taxon>Glires</taxon>
        <taxon>Rodentia</taxon>
        <taxon>Myomorpha</taxon>
        <taxon>Muroidea</taxon>
        <taxon>Muridae</taxon>
        <taxon>Murinae</taxon>
        <taxon>Mus</taxon>
        <taxon>Mus</taxon>
    </lineage>
</organism>
<proteinExistence type="evidence at protein level"/>